<evidence type="ECO:0000250" key="1">
    <source>
        <dbReference type="UniProtKB" id="Q6PFR5"/>
    </source>
</evidence>
<evidence type="ECO:0000255" key="2">
    <source>
        <dbReference type="PROSITE-ProRule" id="PRU00176"/>
    </source>
</evidence>
<evidence type="ECO:0000256" key="3">
    <source>
        <dbReference type="SAM" id="MobiDB-lite"/>
    </source>
</evidence>
<evidence type="ECO:0000269" key="4">
    <source>
    </source>
</evidence>
<evidence type="ECO:0000303" key="5">
    <source>
    </source>
</evidence>
<evidence type="ECO:0000303" key="6">
    <source>
    </source>
</evidence>
<evidence type="ECO:0000305" key="7"/>
<evidence type="ECO:0000312" key="8">
    <source>
        <dbReference type="HGNC" id="HGNC:16645"/>
    </source>
</evidence>
<evidence type="ECO:0007744" key="9">
    <source>
    </source>
</evidence>
<evidence type="ECO:0007744" key="10">
    <source>
    </source>
</evidence>
<evidence type="ECO:0007744" key="11">
    <source>
    </source>
</evidence>
<evidence type="ECO:0007744" key="12">
    <source>
    </source>
</evidence>
<evidence type="ECO:0007744" key="13">
    <source>
    </source>
</evidence>
<evidence type="ECO:0007744" key="14">
    <source>
    </source>
</evidence>
<evidence type="ECO:0007744" key="15">
    <source>
    </source>
</evidence>
<evidence type="ECO:0007744" key="16">
    <source>
    </source>
</evidence>
<evidence type="ECO:0007744" key="17">
    <source>
    </source>
</evidence>
<proteinExistence type="evidence at protein level"/>
<protein>
    <recommendedName>
        <fullName evidence="7">Transformer-2 protein homolog alpha</fullName>
        <shortName>TRA-2 alpha</shortName>
        <shortName>TRA2-alpha</shortName>
    </recommendedName>
    <alternativeName>
        <fullName>Transformer-2 protein homolog A</fullName>
    </alternativeName>
</protein>
<sequence>MSDVEENNFEGRESRSQSKSPTGTPARVKSESRSGSRSPSRVSKHSESHSRSRSKSRSRSRRHSHRRYTRSRSHSHSHRRRSRSRSYTPEYRRRRSRSHSPMSNRRRHTGSRANPDPNTCLGVFGLSLYTTERDLREVFSRYGPLSGVNVVYDQRTGRSRGFAFVYFERIDDSKEAMERANGMELDGRRIRVDYSITKRAHTPTPGIYMGRPTHSGGGGGGGGGGGGGGGGRRRDSYYDRGYDRGYDRYEDYDYRYRRRSPSPYYSRYRSRSRSRSYSPRRY</sequence>
<keyword id="KW-0007">Acetylation</keyword>
<keyword id="KW-0025">Alternative splicing</keyword>
<keyword id="KW-1017">Isopeptide bond</keyword>
<keyword id="KW-0488">Methylation</keyword>
<keyword id="KW-0507">mRNA processing</keyword>
<keyword id="KW-0508">mRNA splicing</keyword>
<keyword id="KW-0539">Nucleus</keyword>
<keyword id="KW-0597">Phosphoprotein</keyword>
<keyword id="KW-1267">Proteomics identification</keyword>
<keyword id="KW-1185">Reference proteome</keyword>
<keyword id="KW-0694">RNA-binding</keyword>
<keyword id="KW-0832">Ubl conjugation</keyword>
<reference key="1">
    <citation type="journal article" date="1996" name="Proc. Natl. Acad. Sci. U.S.A.">
        <title>A human homologue of the Drosophila sex determination factor transformer-2 has conserved splicing regulatory functions.</title>
        <authorList>
            <person name="Dauwalder B."/>
            <person name="Amaya-Manzanares F."/>
            <person name="Mattox W."/>
        </authorList>
    </citation>
    <scope>NUCLEOTIDE SEQUENCE [MRNA] (ISOFORMS LONG AND SHORT)</scope>
</reference>
<reference key="2">
    <citation type="journal article" date="2004" name="Nat. Genet.">
        <title>Complete sequencing and characterization of 21,243 full-length human cDNAs.</title>
        <authorList>
            <person name="Ota T."/>
            <person name="Suzuki Y."/>
            <person name="Nishikawa T."/>
            <person name="Otsuki T."/>
            <person name="Sugiyama T."/>
            <person name="Irie R."/>
            <person name="Wakamatsu A."/>
            <person name="Hayashi K."/>
            <person name="Sato H."/>
            <person name="Nagai K."/>
            <person name="Kimura K."/>
            <person name="Makita H."/>
            <person name="Sekine M."/>
            <person name="Obayashi M."/>
            <person name="Nishi T."/>
            <person name="Shibahara T."/>
            <person name="Tanaka T."/>
            <person name="Ishii S."/>
            <person name="Yamamoto J."/>
            <person name="Saito K."/>
            <person name="Kawai Y."/>
            <person name="Isono Y."/>
            <person name="Nakamura Y."/>
            <person name="Nagahari K."/>
            <person name="Murakami K."/>
            <person name="Yasuda T."/>
            <person name="Iwayanagi T."/>
            <person name="Wagatsuma M."/>
            <person name="Shiratori A."/>
            <person name="Sudo H."/>
            <person name="Hosoiri T."/>
            <person name="Kaku Y."/>
            <person name="Kodaira H."/>
            <person name="Kondo H."/>
            <person name="Sugawara M."/>
            <person name="Takahashi M."/>
            <person name="Kanda K."/>
            <person name="Yokoi T."/>
            <person name="Furuya T."/>
            <person name="Kikkawa E."/>
            <person name="Omura Y."/>
            <person name="Abe K."/>
            <person name="Kamihara K."/>
            <person name="Katsuta N."/>
            <person name="Sato K."/>
            <person name="Tanikawa M."/>
            <person name="Yamazaki M."/>
            <person name="Ninomiya K."/>
            <person name="Ishibashi T."/>
            <person name="Yamashita H."/>
            <person name="Murakawa K."/>
            <person name="Fujimori K."/>
            <person name="Tanai H."/>
            <person name="Kimata M."/>
            <person name="Watanabe M."/>
            <person name="Hiraoka S."/>
            <person name="Chiba Y."/>
            <person name="Ishida S."/>
            <person name="Ono Y."/>
            <person name="Takiguchi S."/>
            <person name="Watanabe S."/>
            <person name="Yosida M."/>
            <person name="Hotuta T."/>
            <person name="Kusano J."/>
            <person name="Kanehori K."/>
            <person name="Takahashi-Fujii A."/>
            <person name="Hara H."/>
            <person name="Tanase T.-O."/>
            <person name="Nomura Y."/>
            <person name="Togiya S."/>
            <person name="Komai F."/>
            <person name="Hara R."/>
            <person name="Takeuchi K."/>
            <person name="Arita M."/>
            <person name="Imose N."/>
            <person name="Musashino K."/>
            <person name="Yuuki H."/>
            <person name="Oshima A."/>
            <person name="Sasaki N."/>
            <person name="Aotsuka S."/>
            <person name="Yoshikawa Y."/>
            <person name="Matsunawa H."/>
            <person name="Ichihara T."/>
            <person name="Shiohata N."/>
            <person name="Sano S."/>
            <person name="Moriya S."/>
            <person name="Momiyama H."/>
            <person name="Satoh N."/>
            <person name="Takami S."/>
            <person name="Terashima Y."/>
            <person name="Suzuki O."/>
            <person name="Nakagawa S."/>
            <person name="Senoh A."/>
            <person name="Mizoguchi H."/>
            <person name="Goto Y."/>
            <person name="Shimizu F."/>
            <person name="Wakebe H."/>
            <person name="Hishigaki H."/>
            <person name="Watanabe T."/>
            <person name="Sugiyama A."/>
            <person name="Takemoto M."/>
            <person name="Kawakami B."/>
            <person name="Yamazaki M."/>
            <person name="Watanabe K."/>
            <person name="Kumagai A."/>
            <person name="Itakura S."/>
            <person name="Fukuzumi Y."/>
            <person name="Fujimori Y."/>
            <person name="Komiyama M."/>
            <person name="Tashiro H."/>
            <person name="Tanigami A."/>
            <person name="Fujiwara T."/>
            <person name="Ono T."/>
            <person name="Yamada K."/>
            <person name="Fujii Y."/>
            <person name="Ozaki K."/>
            <person name="Hirao M."/>
            <person name="Ohmori Y."/>
            <person name="Kawabata A."/>
            <person name="Hikiji T."/>
            <person name="Kobatake N."/>
            <person name="Inagaki H."/>
            <person name="Ikema Y."/>
            <person name="Okamoto S."/>
            <person name="Okitani R."/>
            <person name="Kawakami T."/>
            <person name="Noguchi S."/>
            <person name="Itoh T."/>
            <person name="Shigeta K."/>
            <person name="Senba T."/>
            <person name="Matsumura K."/>
            <person name="Nakajima Y."/>
            <person name="Mizuno T."/>
            <person name="Morinaga M."/>
            <person name="Sasaki M."/>
            <person name="Togashi T."/>
            <person name="Oyama M."/>
            <person name="Hata H."/>
            <person name="Watanabe M."/>
            <person name="Komatsu T."/>
            <person name="Mizushima-Sugano J."/>
            <person name="Satoh T."/>
            <person name="Shirai Y."/>
            <person name="Takahashi Y."/>
            <person name="Nakagawa K."/>
            <person name="Okumura K."/>
            <person name="Nagase T."/>
            <person name="Nomura N."/>
            <person name="Kikuchi H."/>
            <person name="Masuho Y."/>
            <person name="Yamashita R."/>
            <person name="Nakai K."/>
            <person name="Yada T."/>
            <person name="Nakamura Y."/>
            <person name="Ohara O."/>
            <person name="Isogai T."/>
            <person name="Sugano S."/>
        </authorList>
    </citation>
    <scope>NUCLEOTIDE SEQUENCE [LARGE SCALE MRNA] (ISOFORMS 3 AND 4)</scope>
    <source>
        <tissue>Prostate</tissue>
    </source>
</reference>
<reference key="3">
    <citation type="journal article" date="2003" name="Nature">
        <title>The DNA sequence of human chromosome 7.</title>
        <authorList>
            <person name="Hillier L.W."/>
            <person name="Fulton R.S."/>
            <person name="Fulton L.A."/>
            <person name="Graves T.A."/>
            <person name="Pepin K.H."/>
            <person name="Wagner-McPherson C."/>
            <person name="Layman D."/>
            <person name="Maas J."/>
            <person name="Jaeger S."/>
            <person name="Walker R."/>
            <person name="Wylie K."/>
            <person name="Sekhon M."/>
            <person name="Becker M.C."/>
            <person name="O'Laughlin M.D."/>
            <person name="Schaller M.E."/>
            <person name="Fewell G.A."/>
            <person name="Delehaunty K.D."/>
            <person name="Miner T.L."/>
            <person name="Nash W.E."/>
            <person name="Cordes M."/>
            <person name="Du H."/>
            <person name="Sun H."/>
            <person name="Edwards J."/>
            <person name="Bradshaw-Cordum H."/>
            <person name="Ali J."/>
            <person name="Andrews S."/>
            <person name="Isak A."/>
            <person name="Vanbrunt A."/>
            <person name="Nguyen C."/>
            <person name="Du F."/>
            <person name="Lamar B."/>
            <person name="Courtney L."/>
            <person name="Kalicki J."/>
            <person name="Ozersky P."/>
            <person name="Bielicki L."/>
            <person name="Scott K."/>
            <person name="Holmes A."/>
            <person name="Harkins R."/>
            <person name="Harris A."/>
            <person name="Strong C.M."/>
            <person name="Hou S."/>
            <person name="Tomlinson C."/>
            <person name="Dauphin-Kohlberg S."/>
            <person name="Kozlowicz-Reilly A."/>
            <person name="Leonard S."/>
            <person name="Rohlfing T."/>
            <person name="Rock S.M."/>
            <person name="Tin-Wollam A.-M."/>
            <person name="Abbott A."/>
            <person name="Minx P."/>
            <person name="Maupin R."/>
            <person name="Strowmatt C."/>
            <person name="Latreille P."/>
            <person name="Miller N."/>
            <person name="Johnson D."/>
            <person name="Murray J."/>
            <person name="Woessner J.P."/>
            <person name="Wendl M.C."/>
            <person name="Yang S.-P."/>
            <person name="Schultz B.R."/>
            <person name="Wallis J.W."/>
            <person name="Spieth J."/>
            <person name="Bieri T.A."/>
            <person name="Nelson J.O."/>
            <person name="Berkowicz N."/>
            <person name="Wohldmann P.E."/>
            <person name="Cook L.L."/>
            <person name="Hickenbotham M.T."/>
            <person name="Eldred J."/>
            <person name="Williams D."/>
            <person name="Bedell J.A."/>
            <person name="Mardis E.R."/>
            <person name="Clifton S.W."/>
            <person name="Chissoe S.L."/>
            <person name="Marra M.A."/>
            <person name="Raymond C."/>
            <person name="Haugen E."/>
            <person name="Gillett W."/>
            <person name="Zhou Y."/>
            <person name="James R."/>
            <person name="Phelps K."/>
            <person name="Iadanoto S."/>
            <person name="Bubb K."/>
            <person name="Simms E."/>
            <person name="Levy R."/>
            <person name="Clendenning J."/>
            <person name="Kaul R."/>
            <person name="Kent W.J."/>
            <person name="Furey T.S."/>
            <person name="Baertsch R.A."/>
            <person name="Brent M.R."/>
            <person name="Keibler E."/>
            <person name="Flicek P."/>
            <person name="Bork P."/>
            <person name="Suyama M."/>
            <person name="Bailey J.A."/>
            <person name="Portnoy M.E."/>
            <person name="Torrents D."/>
            <person name="Chinwalla A.T."/>
            <person name="Gish W.R."/>
            <person name="Eddy S.R."/>
            <person name="McPherson J.D."/>
            <person name="Olson M.V."/>
            <person name="Eichler E.E."/>
            <person name="Green E.D."/>
            <person name="Waterston R.H."/>
            <person name="Wilson R.K."/>
        </authorList>
    </citation>
    <scope>NUCLEOTIDE SEQUENCE [LARGE SCALE GENOMIC DNA]</scope>
</reference>
<reference key="4">
    <citation type="journal article" date="2004" name="Genome Res.">
        <title>The status, quality, and expansion of the NIH full-length cDNA project: the Mammalian Gene Collection (MGC).</title>
        <authorList>
            <consortium name="The MGC Project Team"/>
        </authorList>
    </citation>
    <scope>NUCLEOTIDE SEQUENCE [LARGE SCALE MRNA]</scope>
    <source>
        <tissue>Uterus</tissue>
    </source>
</reference>
<reference key="5">
    <citation type="journal article" date="1998" name="Cell">
        <title>Human Tra2 proteins are sequence-specific activators of pre-mRNA splicing.</title>
        <authorList>
            <person name="Tacke R."/>
            <person name="Tohyama M."/>
            <person name="Ogawa S."/>
            <person name="Manley J.L."/>
        </authorList>
    </citation>
    <scope>FUNCTION</scope>
    <scope>SUBCELLULAR LOCATION</scope>
    <scope>PHOSPHORYLATION</scope>
    <source>
        <tissue>Cervix carcinoma</tissue>
    </source>
</reference>
<reference key="6">
    <citation type="journal article" date="2006" name="Cell">
        <title>Global, in vivo, and site-specific phosphorylation dynamics in signaling networks.</title>
        <authorList>
            <person name="Olsen J.V."/>
            <person name="Blagoev B."/>
            <person name="Gnad F."/>
            <person name="Macek B."/>
            <person name="Kumar C."/>
            <person name="Mortensen P."/>
            <person name="Mann M."/>
        </authorList>
    </citation>
    <scope>PHOSPHORYLATION [LARGE SCALE ANALYSIS] AT SER-2</scope>
    <scope>IDENTIFICATION BY MASS SPECTROMETRY [LARGE SCALE ANALYSIS]</scope>
    <source>
        <tissue>Cervix carcinoma</tissue>
    </source>
</reference>
<reference key="7">
    <citation type="journal article" date="2008" name="Proc. Natl. Acad. Sci. U.S.A.">
        <title>A quantitative atlas of mitotic phosphorylation.</title>
        <authorList>
            <person name="Dephoure N."/>
            <person name="Zhou C."/>
            <person name="Villen J."/>
            <person name="Beausoleil S.A."/>
            <person name="Bakalarski C.E."/>
            <person name="Elledge S.J."/>
            <person name="Gygi S.P."/>
        </authorList>
    </citation>
    <scope>PHOSPHORYLATION [LARGE SCALE ANALYSIS] AT SER-84; SER-86; THR-88; THR-202 AND THR-204</scope>
    <scope>IDENTIFICATION BY MASS SPECTROMETRY [LARGE SCALE ANALYSIS]</scope>
    <source>
        <tissue>Cervix carcinoma</tissue>
    </source>
</reference>
<reference key="8">
    <citation type="journal article" date="2009" name="Anal. Chem.">
        <title>Lys-N and trypsin cover complementary parts of the phosphoproteome in a refined SCX-based approach.</title>
        <authorList>
            <person name="Gauci S."/>
            <person name="Helbig A.O."/>
            <person name="Slijper M."/>
            <person name="Krijgsveld J."/>
            <person name="Heck A.J."/>
            <person name="Mohammed S."/>
        </authorList>
    </citation>
    <scope>ACETYLATION [LARGE SCALE ANALYSIS] AT SER-2</scope>
    <scope>CLEAVAGE OF INITIATOR METHIONINE [LARGE SCALE ANALYSIS]</scope>
    <scope>IDENTIFICATION BY MASS SPECTROMETRY [LARGE SCALE ANALYSIS]</scope>
</reference>
<reference key="9">
    <citation type="journal article" date="2009" name="Mol. Cell. Proteomics">
        <title>Large-scale proteomics analysis of the human kinome.</title>
        <authorList>
            <person name="Oppermann F.S."/>
            <person name="Gnad F."/>
            <person name="Olsen J.V."/>
            <person name="Hornberger R."/>
            <person name="Greff Z."/>
            <person name="Keri G."/>
            <person name="Mann M."/>
            <person name="Daub H."/>
        </authorList>
    </citation>
    <scope>ACETYLATION [LARGE SCALE ANALYSIS] AT SER-2</scope>
    <scope>PHOSPHORYLATION [LARGE SCALE ANALYSIS] AT SER-2</scope>
    <scope>CLEAVAGE OF INITIATOR METHIONINE [LARGE SCALE ANALYSIS]</scope>
    <scope>IDENTIFICATION BY MASS SPECTROMETRY [LARGE SCALE ANALYSIS]</scope>
</reference>
<reference key="10">
    <citation type="journal article" date="2010" name="Sci. Signal.">
        <title>Quantitative phosphoproteomics reveals widespread full phosphorylation site occupancy during mitosis.</title>
        <authorList>
            <person name="Olsen J.V."/>
            <person name="Vermeulen M."/>
            <person name="Santamaria A."/>
            <person name="Kumar C."/>
            <person name="Miller M.L."/>
            <person name="Jensen L.J."/>
            <person name="Gnad F."/>
            <person name="Cox J."/>
            <person name="Jensen T.S."/>
            <person name="Nigg E.A."/>
            <person name="Brunak S."/>
            <person name="Mann M."/>
        </authorList>
    </citation>
    <scope>ACETYLATION [LARGE SCALE ANALYSIS] AT SER-2</scope>
    <scope>PHOSPHORYLATION [LARGE SCALE ANALYSIS] AT SER-2; SER-14; THR-202 AND THR-204</scope>
    <scope>CLEAVAGE OF INITIATOR METHIONINE [LARGE SCALE ANALYSIS]</scope>
    <scope>IDENTIFICATION BY MASS SPECTROMETRY [LARGE SCALE ANALYSIS]</scope>
    <source>
        <tissue>Cervix carcinoma</tissue>
    </source>
</reference>
<reference key="11">
    <citation type="journal article" date="2011" name="BMC Syst. Biol.">
        <title>Initial characterization of the human central proteome.</title>
        <authorList>
            <person name="Burkard T.R."/>
            <person name="Planyavsky M."/>
            <person name="Kaupe I."/>
            <person name="Breitwieser F.P."/>
            <person name="Buerckstuemmer T."/>
            <person name="Bennett K.L."/>
            <person name="Superti-Furga G."/>
            <person name="Colinge J."/>
        </authorList>
    </citation>
    <scope>IDENTIFICATION BY MASS SPECTROMETRY [LARGE SCALE ANALYSIS]</scope>
</reference>
<reference key="12">
    <citation type="journal article" date="2011" name="Sci. Signal.">
        <title>System-wide temporal characterization of the proteome and phosphoproteome of human embryonic stem cell differentiation.</title>
        <authorList>
            <person name="Rigbolt K.T."/>
            <person name="Prokhorova T.A."/>
            <person name="Akimov V."/>
            <person name="Henningsen J."/>
            <person name="Johansen P.T."/>
            <person name="Kratchmarova I."/>
            <person name="Kassem M."/>
            <person name="Mann M."/>
            <person name="Olsen J.V."/>
            <person name="Blagoev B."/>
        </authorList>
    </citation>
    <scope>ACETYLATION [LARGE SCALE ANALYSIS] AT SER-2</scope>
    <scope>PHOSPHORYLATION [LARGE SCALE ANALYSIS] AT SER-2; SER-14; THR-24; SER-84; SER-86; THR-88; SER-96; SER-98 AND THR-204</scope>
    <scope>CLEAVAGE OF INITIATOR METHIONINE [LARGE SCALE ANALYSIS]</scope>
    <scope>IDENTIFICATION BY MASS SPECTROMETRY [LARGE SCALE ANALYSIS]</scope>
</reference>
<reference key="13">
    <citation type="journal article" date="2012" name="Proc. Natl. Acad. Sci. U.S.A.">
        <title>N-terminal acetylome analyses and functional insights of the N-terminal acetyltransferase NatB.</title>
        <authorList>
            <person name="Van Damme P."/>
            <person name="Lasa M."/>
            <person name="Polevoda B."/>
            <person name="Gazquez C."/>
            <person name="Elosegui-Artola A."/>
            <person name="Kim D.S."/>
            <person name="De Juan-Pardo E."/>
            <person name="Demeyer K."/>
            <person name="Hole K."/>
            <person name="Larrea E."/>
            <person name="Timmerman E."/>
            <person name="Prieto J."/>
            <person name="Arnesen T."/>
            <person name="Sherman F."/>
            <person name="Gevaert K."/>
            <person name="Aldabe R."/>
        </authorList>
    </citation>
    <scope>ACETYLATION [LARGE SCALE ANALYSIS] AT SER-2</scope>
    <scope>CLEAVAGE OF INITIATOR METHIONINE [LARGE SCALE ANALYSIS]</scope>
    <scope>IDENTIFICATION BY MASS SPECTROMETRY [LARGE SCALE ANALYSIS]</scope>
</reference>
<reference key="14">
    <citation type="journal article" date="2013" name="J. Proteome Res.">
        <title>Toward a comprehensive characterization of a human cancer cell phosphoproteome.</title>
        <authorList>
            <person name="Zhou H."/>
            <person name="Di Palma S."/>
            <person name="Preisinger C."/>
            <person name="Peng M."/>
            <person name="Polat A.N."/>
            <person name="Heck A.J."/>
            <person name="Mohammed S."/>
        </authorList>
    </citation>
    <scope>PHOSPHORYLATION [LARGE SCALE ANALYSIS] AT SER-2; SER-14; SER-82; SER-84; SER-86; THR-88; THR-202 AND SER-236</scope>
    <scope>IDENTIFICATION BY MASS SPECTROMETRY [LARGE SCALE ANALYSIS]</scope>
    <source>
        <tissue>Cervix carcinoma</tissue>
        <tissue>Erythroleukemia</tissue>
    </source>
</reference>
<reference key="15">
    <citation type="journal article" date="2017" name="Nat. Struct. Mol. Biol.">
        <title>Site-specific mapping of the human SUMO proteome reveals co-modification with phosphorylation.</title>
        <authorList>
            <person name="Hendriks I.A."/>
            <person name="Lyon D."/>
            <person name="Young C."/>
            <person name="Jensen L.J."/>
            <person name="Vertegaal A.C."/>
            <person name="Nielsen M.L."/>
        </authorList>
    </citation>
    <scope>SUMOYLATION [LARGE SCALE ANALYSIS] AT LYS-198</scope>
    <scope>IDENTIFICATION BY MASS SPECTROMETRY [LARGE SCALE ANALYSIS]</scope>
</reference>
<comment type="function">
    <text evidence="4">Sequence-specific RNA-binding protein which participates in the control of pre-mRNA splicing.</text>
</comment>
<comment type="subunit">
    <text evidence="1 7">Binds to A3 enhancer proteins SRp75, SRp55, SRp40 and SRp30 (Probable). Interacts with ILDR1 (via C-terminus) and ILDR2 (By similarity).</text>
</comment>
<comment type="interaction">
    <interactant intactId="EBI-2685506">
        <id>Q13595</id>
    </interactant>
    <interactant intactId="EBI-746778">
        <id>Q96A72</id>
        <label>MAGOHB</label>
    </interactant>
    <organismsDiffer>false</organismsDiffer>
    <experiments>3</experiments>
</comment>
<comment type="interaction">
    <interactant intactId="EBI-2685506">
        <id>Q13595</id>
    </interactant>
    <interactant intactId="EBI-395959">
        <id>Q15287</id>
        <label>RNPS1</label>
    </interactant>
    <organismsDiffer>false</organismsDiffer>
    <experiments>5</experiments>
</comment>
<comment type="interaction">
    <interactant intactId="EBI-2685506">
        <id>Q13595</id>
    </interactant>
    <interactant intactId="EBI-593303">
        <id>P78362</id>
        <label>SRPK2</label>
    </interactant>
    <organismsDiffer>false</organismsDiffer>
    <experiments>3</experiments>
</comment>
<comment type="interaction">
    <interactant intactId="EBI-2685506">
        <id>Q13595</id>
    </interactant>
    <interactant intactId="EBI-286683">
        <id>O43592</id>
        <label>XPOT</label>
    </interactant>
    <organismsDiffer>false</organismsDiffer>
    <experiments>3</experiments>
</comment>
<comment type="subcellular location">
    <subcellularLocation>
        <location evidence="4">Nucleus</location>
    </subcellularLocation>
</comment>
<comment type="alternative products">
    <event type="alternative splicing"/>
    <isoform>
        <id>Q13595-1</id>
        <name>Long</name>
        <sequence type="displayed"/>
    </isoform>
    <isoform>
        <id>Q13595-2</id>
        <name>Short</name>
        <sequence type="described" ref="VSP_005893 VSP_005894 VSP_005895"/>
    </isoform>
    <isoform>
        <id>Q13595-3</id>
        <name>3</name>
        <sequence type="described" ref="VSP_005893"/>
    </isoform>
    <isoform>
        <id>Q13595-4</id>
        <name>4</name>
        <sequence type="described" ref="VSP_005893 VSP_057405"/>
    </isoform>
</comment>
<comment type="PTM">
    <text evidence="4">Phosphorylated in the RS domains.</text>
</comment>
<comment type="similarity">
    <text evidence="7">Belongs to the splicing factor SR family.</text>
</comment>
<gene>
    <name evidence="8" type="primary">TRA2A</name>
</gene>
<name>TRA2A_HUMAN</name>
<dbReference type="EMBL" id="U53209">
    <property type="protein sequence ID" value="AAC50658.1"/>
    <property type="molecule type" value="mRNA"/>
</dbReference>
<dbReference type="EMBL" id="AK298815">
    <property type="protein sequence ID" value="BAG60948.1"/>
    <property type="molecule type" value="mRNA"/>
</dbReference>
<dbReference type="EMBL" id="AK300565">
    <property type="protein sequence ID" value="BAG62271.1"/>
    <property type="molecule type" value="mRNA"/>
</dbReference>
<dbReference type="EMBL" id="AK300741">
    <property type="protein sequence ID" value="BAG62410.1"/>
    <property type="molecule type" value="mRNA"/>
</dbReference>
<dbReference type="EMBL" id="AC023105">
    <property type="status" value="NOT_ANNOTATED_CDS"/>
    <property type="molecule type" value="Genomic_DNA"/>
</dbReference>
<dbReference type="EMBL" id="BC017094">
    <property type="protein sequence ID" value="AAH17094.1"/>
    <property type="molecule type" value="mRNA"/>
</dbReference>
<dbReference type="CCDS" id="CCDS5383.1">
    <molecule id="Q13595-1"/>
</dbReference>
<dbReference type="CCDS" id="CCDS64609.1">
    <molecule id="Q13595-3"/>
</dbReference>
<dbReference type="CCDS" id="CCDS75569.1">
    <molecule id="Q13595-4"/>
</dbReference>
<dbReference type="RefSeq" id="NP_001269686.1">
    <molecule id="Q13595-3"/>
    <property type="nucleotide sequence ID" value="NM_001282757.2"/>
</dbReference>
<dbReference type="RefSeq" id="NP_001269687.1">
    <molecule id="Q13595-3"/>
    <property type="nucleotide sequence ID" value="NM_001282758.2"/>
</dbReference>
<dbReference type="RefSeq" id="NP_001269688.1">
    <molecule id="Q13595-4"/>
    <property type="nucleotide sequence ID" value="NM_001282759.2"/>
</dbReference>
<dbReference type="RefSeq" id="NP_001349689.1">
    <molecule id="Q13595-3"/>
    <property type="nucleotide sequence ID" value="NM_001362760.2"/>
</dbReference>
<dbReference type="RefSeq" id="NP_001349690.1">
    <molecule id="Q13595-3"/>
    <property type="nucleotide sequence ID" value="NM_001362761.2"/>
</dbReference>
<dbReference type="RefSeq" id="NP_037425.1">
    <molecule id="Q13595-1"/>
    <property type="nucleotide sequence ID" value="NM_013293.5"/>
</dbReference>
<dbReference type="RefSeq" id="XP_005249782.1">
    <property type="nucleotide sequence ID" value="XM_005249725.1"/>
</dbReference>
<dbReference type="RefSeq" id="XP_016867578.1">
    <property type="nucleotide sequence ID" value="XM_017012089.1"/>
</dbReference>
<dbReference type="RefSeq" id="XP_016867579.1">
    <property type="nucleotide sequence ID" value="XM_017012090.1"/>
</dbReference>
<dbReference type="RefSeq" id="XP_047276240.1">
    <molecule id="Q13595-3"/>
    <property type="nucleotide sequence ID" value="XM_047420284.1"/>
</dbReference>
<dbReference type="RefSeq" id="XP_047276241.1">
    <molecule id="Q13595-3"/>
    <property type="nucleotide sequence ID" value="XM_047420285.1"/>
</dbReference>
<dbReference type="RefSeq" id="XP_054214003.1">
    <molecule id="Q13595-3"/>
    <property type="nucleotide sequence ID" value="XM_054358028.1"/>
</dbReference>
<dbReference type="RefSeq" id="XP_054214004.1">
    <molecule id="Q13595-3"/>
    <property type="nucleotide sequence ID" value="XM_054358029.1"/>
</dbReference>
<dbReference type="RefSeq" id="XP_054214005.1">
    <molecule id="Q13595-3"/>
    <property type="nucleotide sequence ID" value="XM_054358030.1"/>
</dbReference>
<dbReference type="SMR" id="Q13595"/>
<dbReference type="BioGRID" id="118948">
    <property type="interactions" value="348"/>
</dbReference>
<dbReference type="FunCoup" id="Q13595">
    <property type="interactions" value="3060"/>
</dbReference>
<dbReference type="IntAct" id="Q13595">
    <property type="interactions" value="354"/>
</dbReference>
<dbReference type="MINT" id="Q13595"/>
<dbReference type="STRING" id="9606.ENSP00000297071"/>
<dbReference type="GlyGen" id="Q13595">
    <property type="glycosylation" value="3 sites, 1 O-linked glycan (1 site)"/>
</dbReference>
<dbReference type="iPTMnet" id="Q13595"/>
<dbReference type="PhosphoSitePlus" id="Q13595"/>
<dbReference type="SwissPalm" id="Q13595"/>
<dbReference type="BioMuta" id="TRA2A"/>
<dbReference type="DMDM" id="4033480"/>
<dbReference type="CPTAC" id="CPTAC-1647"/>
<dbReference type="jPOST" id="Q13595"/>
<dbReference type="MassIVE" id="Q13595"/>
<dbReference type="PaxDb" id="9606-ENSP00000297071"/>
<dbReference type="PeptideAtlas" id="Q13595"/>
<dbReference type="ProteomicsDB" id="4878"/>
<dbReference type="ProteomicsDB" id="5170"/>
<dbReference type="ProteomicsDB" id="59587">
    <molecule id="Q13595-1"/>
</dbReference>
<dbReference type="ProteomicsDB" id="59588">
    <molecule id="Q13595-2"/>
</dbReference>
<dbReference type="Pumba" id="Q13595"/>
<dbReference type="Antibodypedia" id="25690">
    <property type="antibodies" value="175 antibodies from 29 providers"/>
</dbReference>
<dbReference type="DNASU" id="29896"/>
<dbReference type="Ensembl" id="ENST00000297071.9">
    <molecule id="Q13595-1"/>
    <property type="protein sequence ID" value="ENSP00000297071.4"/>
    <property type="gene ID" value="ENSG00000164548.12"/>
</dbReference>
<dbReference type="Ensembl" id="ENST00000392502.8">
    <molecule id="Q13595-4"/>
    <property type="protein sequence ID" value="ENSP00000376290.4"/>
    <property type="gene ID" value="ENSG00000164548.12"/>
</dbReference>
<dbReference type="Ensembl" id="ENST00000621813.4">
    <molecule id="Q13595-3"/>
    <property type="protein sequence ID" value="ENSP00000480822.1"/>
    <property type="gene ID" value="ENSG00000164548.12"/>
</dbReference>
<dbReference type="GeneID" id="29896"/>
<dbReference type="KEGG" id="hsa:29896"/>
<dbReference type="MANE-Select" id="ENST00000297071.9">
    <property type="protein sequence ID" value="ENSP00000297071.4"/>
    <property type="RefSeq nucleotide sequence ID" value="NM_013293.5"/>
    <property type="RefSeq protein sequence ID" value="NP_037425.1"/>
</dbReference>
<dbReference type="UCSC" id="uc011jzb.4">
    <property type="organism name" value="human"/>
</dbReference>
<dbReference type="UCSC" id="uc011jzc.5">
    <molecule id="Q13595-1"/>
    <property type="organism name" value="human"/>
</dbReference>
<dbReference type="AGR" id="HGNC:16645"/>
<dbReference type="CTD" id="29896"/>
<dbReference type="DisGeNET" id="29896"/>
<dbReference type="GeneCards" id="TRA2A"/>
<dbReference type="HGNC" id="HGNC:16645">
    <property type="gene designation" value="TRA2A"/>
</dbReference>
<dbReference type="HPA" id="ENSG00000164548">
    <property type="expression patterns" value="Low tissue specificity"/>
</dbReference>
<dbReference type="MIM" id="602718">
    <property type="type" value="gene"/>
</dbReference>
<dbReference type="neXtProt" id="NX_Q13595"/>
<dbReference type="OpenTargets" id="ENSG00000164548"/>
<dbReference type="PharmGKB" id="PA164726707"/>
<dbReference type="VEuPathDB" id="HostDB:ENSG00000164548"/>
<dbReference type="eggNOG" id="KOG0118">
    <property type="taxonomic scope" value="Eukaryota"/>
</dbReference>
<dbReference type="GeneTree" id="ENSGT00940000157167"/>
<dbReference type="HOGENOM" id="CLU_050438_3_0_1"/>
<dbReference type="InParanoid" id="Q13595"/>
<dbReference type="OMA" id="GFISMST"/>
<dbReference type="OrthoDB" id="439808at2759"/>
<dbReference type="PAN-GO" id="Q13595">
    <property type="GO annotations" value="3 GO annotations based on evolutionary models"/>
</dbReference>
<dbReference type="PhylomeDB" id="Q13595"/>
<dbReference type="TreeFam" id="TF106265"/>
<dbReference type="PathwayCommons" id="Q13595"/>
<dbReference type="SignaLink" id="Q13595"/>
<dbReference type="BioGRID-ORCS" id="29896">
    <property type="hits" value="32 hits in 1167 CRISPR screens"/>
</dbReference>
<dbReference type="ChiTaRS" id="TRA2A">
    <property type="organism name" value="human"/>
</dbReference>
<dbReference type="GeneWiki" id="TRA2A"/>
<dbReference type="GenomeRNAi" id="29896"/>
<dbReference type="Pharos" id="Q13595">
    <property type="development level" value="Tbio"/>
</dbReference>
<dbReference type="PRO" id="PR:Q13595"/>
<dbReference type="Proteomes" id="UP000005640">
    <property type="component" value="Chromosome 7"/>
</dbReference>
<dbReference type="RNAct" id="Q13595">
    <property type="molecule type" value="protein"/>
</dbReference>
<dbReference type="Bgee" id="ENSG00000164548">
    <property type="expression patterns" value="Expressed in right uterine tube and 207 other cell types or tissues"/>
</dbReference>
<dbReference type="ExpressionAtlas" id="Q13595">
    <property type="expression patterns" value="baseline and differential"/>
</dbReference>
<dbReference type="GO" id="GO:0043231">
    <property type="term" value="C:intracellular membrane-bounded organelle"/>
    <property type="evidence" value="ECO:0000314"/>
    <property type="project" value="HPA"/>
</dbReference>
<dbReference type="GO" id="GO:0005730">
    <property type="term" value="C:nucleolus"/>
    <property type="evidence" value="ECO:0000314"/>
    <property type="project" value="HPA"/>
</dbReference>
<dbReference type="GO" id="GO:0005654">
    <property type="term" value="C:nucleoplasm"/>
    <property type="evidence" value="ECO:0000314"/>
    <property type="project" value="HPA"/>
</dbReference>
<dbReference type="GO" id="GO:0005634">
    <property type="term" value="C:nucleus"/>
    <property type="evidence" value="ECO:0000314"/>
    <property type="project" value="UniProtKB"/>
</dbReference>
<dbReference type="GO" id="GO:0005681">
    <property type="term" value="C:spliceosomal complex"/>
    <property type="evidence" value="ECO:0000318"/>
    <property type="project" value="GO_Central"/>
</dbReference>
<dbReference type="GO" id="GO:0003723">
    <property type="term" value="F:RNA binding"/>
    <property type="evidence" value="ECO:0007005"/>
    <property type="project" value="UniProtKB"/>
</dbReference>
<dbReference type="GO" id="GO:0000398">
    <property type="term" value="P:mRNA splicing, via spliceosome"/>
    <property type="evidence" value="ECO:0000314"/>
    <property type="project" value="UniProtKB"/>
</dbReference>
<dbReference type="GO" id="GO:0048026">
    <property type="term" value="P:positive regulation of mRNA splicing, via spliceosome"/>
    <property type="evidence" value="ECO:0000318"/>
    <property type="project" value="GO_Central"/>
</dbReference>
<dbReference type="CDD" id="cd12363">
    <property type="entry name" value="RRM_TRA2"/>
    <property type="match status" value="1"/>
</dbReference>
<dbReference type="FunFam" id="3.30.70.330:FF:000200">
    <property type="entry name" value="transformer-2 protein homolog alpha"/>
    <property type="match status" value="1"/>
</dbReference>
<dbReference type="Gene3D" id="3.30.70.330">
    <property type="match status" value="1"/>
</dbReference>
<dbReference type="InterPro" id="IPR012677">
    <property type="entry name" value="Nucleotide-bd_a/b_plait_sf"/>
</dbReference>
<dbReference type="InterPro" id="IPR035979">
    <property type="entry name" value="RBD_domain_sf"/>
</dbReference>
<dbReference type="InterPro" id="IPR050441">
    <property type="entry name" value="RBM"/>
</dbReference>
<dbReference type="InterPro" id="IPR000504">
    <property type="entry name" value="RRM_dom"/>
</dbReference>
<dbReference type="PANTHER" id="PTHR48034">
    <property type="entry name" value="TRANSFORMER-2 SEX-DETERMINING PROTEIN-RELATED"/>
    <property type="match status" value="1"/>
</dbReference>
<dbReference type="Pfam" id="PF00076">
    <property type="entry name" value="RRM_1"/>
    <property type="match status" value="1"/>
</dbReference>
<dbReference type="SMART" id="SM00360">
    <property type="entry name" value="RRM"/>
    <property type="match status" value="1"/>
</dbReference>
<dbReference type="SUPFAM" id="SSF54928">
    <property type="entry name" value="RNA-binding domain, RBD"/>
    <property type="match status" value="1"/>
</dbReference>
<dbReference type="PROSITE" id="PS50102">
    <property type="entry name" value="RRM"/>
    <property type="match status" value="1"/>
</dbReference>
<feature type="initiator methionine" description="Removed" evidence="11 12 13 14 15">
    <location>
        <position position="1"/>
    </location>
</feature>
<feature type="chain" id="PRO_0000081981" description="Transformer-2 protein homolog alpha">
    <location>
        <begin position="2"/>
        <end position="282"/>
    </location>
</feature>
<feature type="domain" description="RRM" evidence="2">
    <location>
        <begin position="119"/>
        <end position="197"/>
    </location>
</feature>
<feature type="region of interest" description="Disordered" evidence="3">
    <location>
        <begin position="1"/>
        <end position="118"/>
    </location>
</feature>
<feature type="region of interest" description="Linker">
    <location>
        <begin position="198"/>
        <end position="225"/>
    </location>
</feature>
<feature type="region of interest" description="Disordered" evidence="3">
    <location>
        <begin position="201"/>
        <end position="245"/>
    </location>
</feature>
<feature type="region of interest" description="Disordered" evidence="3">
    <location>
        <begin position="260"/>
        <end position="282"/>
    </location>
</feature>
<feature type="compositionally biased region" description="Basic residues" evidence="3">
    <location>
        <begin position="51"/>
        <end position="84"/>
    </location>
</feature>
<feature type="compositionally biased region" description="Basic residues" evidence="3">
    <location>
        <begin position="92"/>
        <end position="110"/>
    </location>
</feature>
<feature type="compositionally biased region" description="Gly residues" evidence="3">
    <location>
        <begin position="215"/>
        <end position="230"/>
    </location>
</feature>
<feature type="compositionally biased region" description="Basic and acidic residues" evidence="3">
    <location>
        <begin position="232"/>
        <end position="245"/>
    </location>
</feature>
<feature type="compositionally biased region" description="Basic residues" evidence="3">
    <location>
        <begin position="268"/>
        <end position="282"/>
    </location>
</feature>
<feature type="modified residue" description="N-acetylserine" evidence="11 12 13 14 15">
    <location>
        <position position="2"/>
    </location>
</feature>
<feature type="modified residue" description="Phosphoserine" evidence="9 11 13 14 16">
    <location>
        <position position="2"/>
    </location>
</feature>
<feature type="modified residue" description="Phosphoserine" evidence="13 14 16">
    <location>
        <position position="14"/>
    </location>
</feature>
<feature type="modified residue" description="Phosphothreonine" evidence="14">
    <location>
        <position position="24"/>
    </location>
</feature>
<feature type="modified residue" description="Phosphoserine" evidence="16">
    <location>
        <position position="82"/>
    </location>
</feature>
<feature type="modified residue" description="Phosphoserine" evidence="10 14 16">
    <location>
        <position position="84"/>
    </location>
</feature>
<feature type="modified residue" description="Phosphoserine" evidence="10 14 16">
    <location>
        <position position="86"/>
    </location>
</feature>
<feature type="modified residue" description="Phosphothreonine" evidence="10 14 16">
    <location>
        <position position="88"/>
    </location>
</feature>
<feature type="modified residue" description="Phosphoserine" evidence="14">
    <location>
        <position position="96"/>
    </location>
</feature>
<feature type="modified residue" description="Phosphoserine" evidence="14">
    <location>
        <position position="98"/>
    </location>
</feature>
<feature type="modified residue" description="Phosphothreonine" evidence="10 13 16">
    <location>
        <position position="202"/>
    </location>
</feature>
<feature type="modified residue" description="Phosphothreonine" evidence="10 13 14">
    <location>
        <position position="204"/>
    </location>
</feature>
<feature type="modified residue" description="Omega-N-methylarginine" evidence="1">
    <location>
        <position position="232"/>
    </location>
</feature>
<feature type="modified residue" description="Phosphoserine" evidence="16">
    <location>
        <position position="236"/>
    </location>
</feature>
<feature type="cross-link" description="Glycyl lysine isopeptide (Lys-Gly) (interchain with G-Cter in SUMO2)" evidence="17">
    <location>
        <position position="198"/>
    </location>
</feature>
<feature type="splice variant" id="VSP_005893" description="In isoform Short, isoform 3 and isoform 4." evidence="5 6">
    <location>
        <begin position="1"/>
        <end position="101"/>
    </location>
</feature>
<feature type="splice variant" id="VSP_005894" description="In isoform Short." evidence="6">
    <original>H</original>
    <variation>Q</variation>
    <location>
        <position position="214"/>
    </location>
</feature>
<feature type="splice variant" id="VSP_005895" description="In isoform Short." evidence="6">
    <location>
        <begin position="215"/>
        <end position="282"/>
    </location>
</feature>
<feature type="splice variant" id="VSP_057405" description="In isoform 4." evidence="5">
    <location>
        <position position="257"/>
    </location>
</feature>
<accession>Q13595</accession>
<accession>B4DQI6</accession>
<accession>B4DUA9</accession>
<accession>E9PD75</accession>
<organism>
    <name type="scientific">Homo sapiens</name>
    <name type="common">Human</name>
    <dbReference type="NCBI Taxonomy" id="9606"/>
    <lineage>
        <taxon>Eukaryota</taxon>
        <taxon>Metazoa</taxon>
        <taxon>Chordata</taxon>
        <taxon>Craniata</taxon>
        <taxon>Vertebrata</taxon>
        <taxon>Euteleostomi</taxon>
        <taxon>Mammalia</taxon>
        <taxon>Eutheria</taxon>
        <taxon>Euarchontoglires</taxon>
        <taxon>Primates</taxon>
        <taxon>Haplorrhini</taxon>
        <taxon>Catarrhini</taxon>
        <taxon>Hominidae</taxon>
        <taxon>Homo</taxon>
    </lineage>
</organism>